<sequence length="104" mass="11865">MSESSTYFEKQRDMLIQEIGVSIESVVYNLDILNRSLNGSISVGKEFDNVGRLWSHFYDGLNQLKERNNQEETNKNDQGDANDDDSSSDEHGSSDEEIDQDQEN</sequence>
<proteinExistence type="inferred from homology"/>
<keyword id="KW-0131">Cell cycle</keyword>
<keyword id="KW-0132">Cell division</keyword>
<keyword id="KW-0137">Centromere</keyword>
<keyword id="KW-0158">Chromosome</keyword>
<keyword id="KW-0159">Chromosome partition</keyword>
<keyword id="KW-0963">Cytoplasm</keyword>
<keyword id="KW-0206">Cytoskeleton</keyword>
<keyword id="KW-0995">Kinetochore</keyword>
<keyword id="KW-0493">Microtubule</keyword>
<keyword id="KW-0498">Mitosis</keyword>
<keyword id="KW-0539">Nucleus</keyword>
<keyword id="KW-1185">Reference proteome</keyword>
<protein>
    <recommendedName>
        <fullName>DASH complex subunit DAD1</fullName>
    </recommendedName>
    <alternativeName>
        <fullName>Outer kinetochore protein DAD1</fullName>
    </alternativeName>
</protein>
<organism>
    <name type="scientific">Debaryomyces hansenii (strain ATCC 36239 / CBS 767 / BCRC 21394 / JCM 1990 / NBRC 0083 / IGC 2968)</name>
    <name type="common">Yeast</name>
    <name type="synonym">Torulaspora hansenii</name>
    <dbReference type="NCBI Taxonomy" id="284592"/>
    <lineage>
        <taxon>Eukaryota</taxon>
        <taxon>Fungi</taxon>
        <taxon>Dikarya</taxon>
        <taxon>Ascomycota</taxon>
        <taxon>Saccharomycotina</taxon>
        <taxon>Pichiomycetes</taxon>
        <taxon>Debaryomycetaceae</taxon>
        <taxon>Debaryomyces</taxon>
    </lineage>
</organism>
<feature type="chain" id="PRO_0000127609" description="DASH complex subunit DAD1">
    <location>
        <begin position="1"/>
        <end position="104"/>
    </location>
</feature>
<feature type="region of interest" description="Disordered" evidence="3">
    <location>
        <begin position="65"/>
        <end position="104"/>
    </location>
</feature>
<feature type="compositionally biased region" description="Basic and acidic residues" evidence="3">
    <location>
        <begin position="65"/>
        <end position="78"/>
    </location>
</feature>
<feature type="compositionally biased region" description="Acidic residues" evidence="3">
    <location>
        <begin position="95"/>
        <end position="104"/>
    </location>
</feature>
<dbReference type="EMBL" id="CR382138">
    <property type="protein sequence ID" value="CAG89476.1"/>
    <property type="molecule type" value="Genomic_DNA"/>
</dbReference>
<dbReference type="RefSeq" id="XP_461094.1">
    <property type="nucleotide sequence ID" value="XM_461094.1"/>
</dbReference>
<dbReference type="SMR" id="Q6BL27"/>
<dbReference type="FunCoup" id="Q6BL27">
    <property type="interactions" value="25"/>
</dbReference>
<dbReference type="GeneID" id="2903110"/>
<dbReference type="KEGG" id="dha:DEHA2F16874g"/>
<dbReference type="VEuPathDB" id="FungiDB:DEHA2F16874g"/>
<dbReference type="eggNOG" id="ENOG502SBWQ">
    <property type="taxonomic scope" value="Eukaryota"/>
</dbReference>
<dbReference type="HOGENOM" id="CLU_142427_2_1_1"/>
<dbReference type="InParanoid" id="Q6BL27"/>
<dbReference type="OMA" id="DEYGERC"/>
<dbReference type="OrthoDB" id="5566853at2759"/>
<dbReference type="Proteomes" id="UP000000599">
    <property type="component" value="Chromosome F"/>
</dbReference>
<dbReference type="GO" id="GO:0005737">
    <property type="term" value="C:cytoplasm"/>
    <property type="evidence" value="ECO:0007669"/>
    <property type="project" value="UniProtKB-KW"/>
</dbReference>
<dbReference type="GO" id="GO:0042729">
    <property type="term" value="C:DASH complex"/>
    <property type="evidence" value="ECO:0000250"/>
    <property type="project" value="UniProtKB"/>
</dbReference>
<dbReference type="GO" id="GO:0072686">
    <property type="term" value="C:mitotic spindle"/>
    <property type="evidence" value="ECO:0007669"/>
    <property type="project" value="InterPro"/>
</dbReference>
<dbReference type="GO" id="GO:0044732">
    <property type="term" value="C:mitotic spindle pole body"/>
    <property type="evidence" value="ECO:0007669"/>
    <property type="project" value="TreeGrafter"/>
</dbReference>
<dbReference type="GO" id="GO:0005876">
    <property type="term" value="C:spindle microtubule"/>
    <property type="evidence" value="ECO:0007669"/>
    <property type="project" value="TreeGrafter"/>
</dbReference>
<dbReference type="GO" id="GO:0051010">
    <property type="term" value="F:microtubule plus-end binding"/>
    <property type="evidence" value="ECO:0007669"/>
    <property type="project" value="TreeGrafter"/>
</dbReference>
<dbReference type="GO" id="GO:0008608">
    <property type="term" value="P:attachment of spindle microtubules to kinetochore"/>
    <property type="evidence" value="ECO:0000250"/>
    <property type="project" value="UniProtKB"/>
</dbReference>
<dbReference type="GO" id="GO:0051301">
    <property type="term" value="P:cell division"/>
    <property type="evidence" value="ECO:0007669"/>
    <property type="project" value="UniProtKB-KW"/>
</dbReference>
<dbReference type="GO" id="GO:1990758">
    <property type="term" value="P:mitotic sister chromatid biorientation"/>
    <property type="evidence" value="ECO:0000250"/>
    <property type="project" value="UniProtKB"/>
</dbReference>
<dbReference type="GO" id="GO:1990976">
    <property type="term" value="P:protein transport along microtubule to mitotic spindle pole body"/>
    <property type="evidence" value="ECO:0000250"/>
    <property type="project" value="UniProtKB"/>
</dbReference>
<dbReference type="InterPro" id="IPR013958">
    <property type="entry name" value="DASH_Dad1"/>
</dbReference>
<dbReference type="PANTHER" id="PTHR28025">
    <property type="entry name" value="DASH COMPLEX SUBUNIT DAD1"/>
    <property type="match status" value="1"/>
</dbReference>
<dbReference type="PANTHER" id="PTHR28025:SF1">
    <property type="entry name" value="DASH COMPLEX SUBUNIT DAD1"/>
    <property type="match status" value="1"/>
</dbReference>
<dbReference type="Pfam" id="PF08649">
    <property type="entry name" value="DASH_Dad1"/>
    <property type="match status" value="1"/>
</dbReference>
<comment type="function">
    <text evidence="2">Component of the DASH complex that connects microtubules with kinetochores and couples microtubule depolymerisation to chromosome movement; it is involved in retrieving kinetochores to the spindle poles before their re-orientation on the spindle in early mitosis and allows microtubule depolymerization to pull chromosomes apart and resist detachment during anaphase. Kinetochores, consisting of a centromere-associated inner segment and a microtubule-contacting outer segment, play a crucial role in chromosome segregation by mediating the physical connection between centromeric DNA and microtubules. Kinetochores also serve as an input point for the spindle assembly checkpoint, which delays anaphase until all chromosomes have bioriented on the mitotic spindle.</text>
</comment>
<comment type="subunit">
    <text evidence="1 2">Component of the DASH complex consisting of ASK1, DAD1, DAD2, DAD3, DAD4, DAM1, DUO1, HSK3, SPC19 and SPC34, with a stoichiometry of one copy of each subunit per complex. Multiple DASH complexes oligomerize to form a ring that encircles spindle microtubules and organizes the rod-like NDC80 complexes of the outer kinetochore. DASH complex oligomerization strengthens microtubule attachments (By similarity). On cytoplasmic microtubules, DASH complexes appear to form patches instead of rings (By similarity).</text>
</comment>
<comment type="subcellular location">
    <subcellularLocation>
        <location evidence="2">Nucleus</location>
    </subcellularLocation>
    <subcellularLocation>
        <location evidence="2">Cytoplasm</location>
        <location evidence="2">Cytoskeleton</location>
        <location evidence="2">Spindle</location>
    </subcellularLocation>
    <subcellularLocation>
        <location evidence="2">Chromosome</location>
        <location evidence="2">Centromere</location>
        <location evidence="2">Kinetochore</location>
    </subcellularLocation>
</comment>
<comment type="similarity">
    <text evidence="4">Belongs to the DASH complex DAD1 family.</text>
</comment>
<accession>Q6BL27</accession>
<gene>
    <name type="primary">DAD1</name>
    <name type="ordered locus">DEHA2F16874g</name>
</gene>
<evidence type="ECO:0000250" key="1">
    <source>
        <dbReference type="UniProtKB" id="P87297"/>
    </source>
</evidence>
<evidence type="ECO:0000250" key="2">
    <source>
        <dbReference type="UniProtKB" id="Q12248"/>
    </source>
</evidence>
<evidence type="ECO:0000256" key="3">
    <source>
        <dbReference type="SAM" id="MobiDB-lite"/>
    </source>
</evidence>
<evidence type="ECO:0000305" key="4"/>
<name>DAD1_DEBHA</name>
<reference key="1">
    <citation type="journal article" date="2004" name="Nature">
        <title>Genome evolution in yeasts.</title>
        <authorList>
            <person name="Dujon B."/>
            <person name="Sherman D."/>
            <person name="Fischer G."/>
            <person name="Durrens P."/>
            <person name="Casaregola S."/>
            <person name="Lafontaine I."/>
            <person name="de Montigny J."/>
            <person name="Marck C."/>
            <person name="Neuveglise C."/>
            <person name="Talla E."/>
            <person name="Goffard N."/>
            <person name="Frangeul L."/>
            <person name="Aigle M."/>
            <person name="Anthouard V."/>
            <person name="Babour A."/>
            <person name="Barbe V."/>
            <person name="Barnay S."/>
            <person name="Blanchin S."/>
            <person name="Beckerich J.-M."/>
            <person name="Beyne E."/>
            <person name="Bleykasten C."/>
            <person name="Boisrame A."/>
            <person name="Boyer J."/>
            <person name="Cattolico L."/>
            <person name="Confanioleri F."/>
            <person name="de Daruvar A."/>
            <person name="Despons L."/>
            <person name="Fabre E."/>
            <person name="Fairhead C."/>
            <person name="Ferry-Dumazet H."/>
            <person name="Groppi A."/>
            <person name="Hantraye F."/>
            <person name="Hennequin C."/>
            <person name="Jauniaux N."/>
            <person name="Joyet P."/>
            <person name="Kachouri R."/>
            <person name="Kerrest A."/>
            <person name="Koszul R."/>
            <person name="Lemaire M."/>
            <person name="Lesur I."/>
            <person name="Ma L."/>
            <person name="Muller H."/>
            <person name="Nicaud J.-M."/>
            <person name="Nikolski M."/>
            <person name="Oztas S."/>
            <person name="Ozier-Kalogeropoulos O."/>
            <person name="Pellenz S."/>
            <person name="Potier S."/>
            <person name="Richard G.-F."/>
            <person name="Straub M.-L."/>
            <person name="Suleau A."/>
            <person name="Swennen D."/>
            <person name="Tekaia F."/>
            <person name="Wesolowski-Louvel M."/>
            <person name="Westhof E."/>
            <person name="Wirth B."/>
            <person name="Zeniou-Meyer M."/>
            <person name="Zivanovic Y."/>
            <person name="Bolotin-Fukuhara M."/>
            <person name="Thierry A."/>
            <person name="Bouchier C."/>
            <person name="Caudron B."/>
            <person name="Scarpelli C."/>
            <person name="Gaillardin C."/>
            <person name="Weissenbach J."/>
            <person name="Wincker P."/>
            <person name="Souciet J.-L."/>
        </authorList>
    </citation>
    <scope>NUCLEOTIDE SEQUENCE [LARGE SCALE GENOMIC DNA]</scope>
    <source>
        <strain>ATCC 36239 / CBS 767 / BCRC 21394 / JCM 1990 / NBRC 0083 / IGC 2968</strain>
    </source>
</reference>